<keyword id="KW-0030">Aminoacyl-tRNA synthetase</keyword>
<keyword id="KW-0067">ATP-binding</keyword>
<keyword id="KW-0963">Cytoplasm</keyword>
<keyword id="KW-0436">Ligase</keyword>
<keyword id="KW-0547">Nucleotide-binding</keyword>
<keyword id="KW-0648">Protein biosynthesis</keyword>
<name>SYGA_STRZT</name>
<sequence>MSKKLTFQEIILTLQQFWNDQGCMLMQAYDNEKGAGTMSPYTFLRAIGPEPWNAAYVEPSRRPADGRYGENPNRLYQHHQFQVVMKPSPSNIQELYLESLEKLGINPLEHDIRFVEDNWENPSTGSAGLGWEVWLDGMEITQFTYFQQVGGLATGPVTAEVTYGLERLASYIQEVDSVYDIEWADGVKYGEIFIQPEYEHSKYSFEISDQEMLLENFDKFEKEAGRALEEGLVHPAYDYVLKCSHTFNLLDARGAVSVTERAGYIARIRNLARVVAKTFVAERKRLGYPLLDEETRVKLLAEDAE</sequence>
<protein>
    <recommendedName>
        <fullName evidence="1">Glycine--tRNA ligase alpha subunit</fullName>
        <ecNumber evidence="1">6.1.1.14</ecNumber>
    </recommendedName>
    <alternativeName>
        <fullName evidence="1">Glycyl-tRNA synthetase alpha subunit</fullName>
        <shortName evidence="1">GlyRS</shortName>
    </alternativeName>
</protein>
<proteinExistence type="inferred from homology"/>
<accession>C1CQP3</accession>
<reference key="1">
    <citation type="journal article" date="2010" name="Genome Biol.">
        <title>Structure and dynamics of the pan-genome of Streptococcus pneumoniae and closely related species.</title>
        <authorList>
            <person name="Donati C."/>
            <person name="Hiller N.L."/>
            <person name="Tettelin H."/>
            <person name="Muzzi A."/>
            <person name="Croucher N.J."/>
            <person name="Angiuoli S.V."/>
            <person name="Oggioni M."/>
            <person name="Dunning Hotopp J.C."/>
            <person name="Hu F.Z."/>
            <person name="Riley D.R."/>
            <person name="Covacci A."/>
            <person name="Mitchell T.J."/>
            <person name="Bentley S.D."/>
            <person name="Kilian M."/>
            <person name="Ehrlich G.D."/>
            <person name="Rappuoli R."/>
            <person name="Moxon E.R."/>
            <person name="Masignani V."/>
        </authorList>
    </citation>
    <scope>NUCLEOTIDE SEQUENCE [LARGE SCALE GENOMIC DNA]</scope>
    <source>
        <strain>Taiwan19F-14</strain>
    </source>
</reference>
<gene>
    <name evidence="1" type="primary">glyQ</name>
    <name type="ordered locus">SPT_0800</name>
</gene>
<comment type="catalytic activity">
    <reaction evidence="1">
        <text>tRNA(Gly) + glycine + ATP = glycyl-tRNA(Gly) + AMP + diphosphate</text>
        <dbReference type="Rhea" id="RHEA:16013"/>
        <dbReference type="Rhea" id="RHEA-COMP:9664"/>
        <dbReference type="Rhea" id="RHEA-COMP:9683"/>
        <dbReference type="ChEBI" id="CHEBI:30616"/>
        <dbReference type="ChEBI" id="CHEBI:33019"/>
        <dbReference type="ChEBI" id="CHEBI:57305"/>
        <dbReference type="ChEBI" id="CHEBI:78442"/>
        <dbReference type="ChEBI" id="CHEBI:78522"/>
        <dbReference type="ChEBI" id="CHEBI:456215"/>
        <dbReference type="EC" id="6.1.1.14"/>
    </reaction>
</comment>
<comment type="subunit">
    <text evidence="1">Tetramer of two alpha and two beta subunits.</text>
</comment>
<comment type="subcellular location">
    <subcellularLocation>
        <location evidence="1">Cytoplasm</location>
    </subcellularLocation>
</comment>
<comment type="similarity">
    <text evidence="1">Belongs to the class-II aminoacyl-tRNA synthetase family.</text>
</comment>
<organism>
    <name type="scientific">Streptococcus pneumoniae (strain Taiwan19F-14)</name>
    <dbReference type="NCBI Taxonomy" id="487213"/>
    <lineage>
        <taxon>Bacteria</taxon>
        <taxon>Bacillati</taxon>
        <taxon>Bacillota</taxon>
        <taxon>Bacilli</taxon>
        <taxon>Lactobacillales</taxon>
        <taxon>Streptococcaceae</taxon>
        <taxon>Streptococcus</taxon>
    </lineage>
</organism>
<feature type="chain" id="PRO_1000125562" description="Glycine--tRNA ligase alpha subunit">
    <location>
        <begin position="1"/>
        <end position="305"/>
    </location>
</feature>
<dbReference type="EC" id="6.1.1.14" evidence="1"/>
<dbReference type="EMBL" id="CP000921">
    <property type="protein sequence ID" value="ACO22411.1"/>
    <property type="molecule type" value="Genomic_DNA"/>
</dbReference>
<dbReference type="RefSeq" id="WP_000038738.1">
    <property type="nucleotide sequence ID" value="NC_012469.1"/>
</dbReference>
<dbReference type="SMR" id="C1CQP3"/>
<dbReference type="KEGG" id="snt:SPT_0800"/>
<dbReference type="HOGENOM" id="CLU_057066_1_0_9"/>
<dbReference type="GO" id="GO:0005829">
    <property type="term" value="C:cytosol"/>
    <property type="evidence" value="ECO:0007669"/>
    <property type="project" value="TreeGrafter"/>
</dbReference>
<dbReference type="GO" id="GO:0005524">
    <property type="term" value="F:ATP binding"/>
    <property type="evidence" value="ECO:0007669"/>
    <property type="project" value="UniProtKB-UniRule"/>
</dbReference>
<dbReference type="GO" id="GO:0140096">
    <property type="term" value="F:catalytic activity, acting on a protein"/>
    <property type="evidence" value="ECO:0007669"/>
    <property type="project" value="UniProtKB-ARBA"/>
</dbReference>
<dbReference type="GO" id="GO:0004820">
    <property type="term" value="F:glycine-tRNA ligase activity"/>
    <property type="evidence" value="ECO:0007669"/>
    <property type="project" value="UniProtKB-UniRule"/>
</dbReference>
<dbReference type="GO" id="GO:0016740">
    <property type="term" value="F:transferase activity"/>
    <property type="evidence" value="ECO:0007669"/>
    <property type="project" value="UniProtKB-ARBA"/>
</dbReference>
<dbReference type="GO" id="GO:0006426">
    <property type="term" value="P:glycyl-tRNA aminoacylation"/>
    <property type="evidence" value="ECO:0007669"/>
    <property type="project" value="UniProtKB-UniRule"/>
</dbReference>
<dbReference type="CDD" id="cd00733">
    <property type="entry name" value="GlyRS_alpha_core"/>
    <property type="match status" value="1"/>
</dbReference>
<dbReference type="FunFam" id="3.30.930.10:FF:000006">
    <property type="entry name" value="Glycine--tRNA ligase alpha subunit"/>
    <property type="match status" value="1"/>
</dbReference>
<dbReference type="Gene3D" id="3.30.930.10">
    <property type="entry name" value="Bira Bifunctional Protein, Domain 2"/>
    <property type="match status" value="1"/>
</dbReference>
<dbReference type="Gene3D" id="1.20.58.180">
    <property type="entry name" value="Class II aaRS and biotin synthetases, domain 2"/>
    <property type="match status" value="1"/>
</dbReference>
<dbReference type="HAMAP" id="MF_00254">
    <property type="entry name" value="Gly_tRNA_synth_alpha"/>
    <property type="match status" value="1"/>
</dbReference>
<dbReference type="InterPro" id="IPR045864">
    <property type="entry name" value="aa-tRNA-synth_II/BPL/LPL"/>
</dbReference>
<dbReference type="InterPro" id="IPR006194">
    <property type="entry name" value="Gly-tRNA-synth_heterodimer"/>
</dbReference>
<dbReference type="InterPro" id="IPR002310">
    <property type="entry name" value="Gly-tRNA_ligase_asu"/>
</dbReference>
<dbReference type="NCBIfam" id="TIGR00388">
    <property type="entry name" value="glyQ"/>
    <property type="match status" value="1"/>
</dbReference>
<dbReference type="NCBIfam" id="NF006827">
    <property type="entry name" value="PRK09348.1"/>
    <property type="match status" value="1"/>
</dbReference>
<dbReference type="PANTHER" id="PTHR30075:SF2">
    <property type="entry name" value="GLYCINE--TRNA LIGASE, CHLOROPLASTIC_MITOCHONDRIAL 2"/>
    <property type="match status" value="1"/>
</dbReference>
<dbReference type="PANTHER" id="PTHR30075">
    <property type="entry name" value="GLYCYL-TRNA SYNTHETASE"/>
    <property type="match status" value="1"/>
</dbReference>
<dbReference type="Pfam" id="PF02091">
    <property type="entry name" value="tRNA-synt_2e"/>
    <property type="match status" value="1"/>
</dbReference>
<dbReference type="PRINTS" id="PR01044">
    <property type="entry name" value="TRNASYNTHGA"/>
</dbReference>
<dbReference type="SUPFAM" id="SSF55681">
    <property type="entry name" value="Class II aaRS and biotin synthetases"/>
    <property type="match status" value="1"/>
</dbReference>
<dbReference type="PROSITE" id="PS50861">
    <property type="entry name" value="AA_TRNA_LIGASE_II_GLYAB"/>
    <property type="match status" value="1"/>
</dbReference>
<evidence type="ECO:0000255" key="1">
    <source>
        <dbReference type="HAMAP-Rule" id="MF_00254"/>
    </source>
</evidence>